<gene>
    <name evidence="1" type="primary">atpA</name>
    <name type="ordered locus">Npun_F4863</name>
</gene>
<accession>B2J058</accession>
<keyword id="KW-0066">ATP synthesis</keyword>
<keyword id="KW-0067">ATP-binding</keyword>
<keyword id="KW-0139">CF(1)</keyword>
<keyword id="KW-0375">Hydrogen ion transport</keyword>
<keyword id="KW-0406">Ion transport</keyword>
<keyword id="KW-0472">Membrane</keyword>
<keyword id="KW-0547">Nucleotide-binding</keyword>
<keyword id="KW-1185">Reference proteome</keyword>
<keyword id="KW-0793">Thylakoid</keyword>
<keyword id="KW-1278">Translocase</keyword>
<keyword id="KW-0813">Transport</keyword>
<proteinExistence type="inferred from homology"/>
<name>ATPA_NOSP7</name>
<dbReference type="EC" id="7.1.2.2" evidence="1"/>
<dbReference type="EMBL" id="CP001037">
    <property type="protein sequence ID" value="ACC83210.1"/>
    <property type="molecule type" value="Genomic_DNA"/>
</dbReference>
<dbReference type="RefSeq" id="WP_012411166.1">
    <property type="nucleotide sequence ID" value="NC_010628.1"/>
</dbReference>
<dbReference type="SMR" id="B2J058"/>
<dbReference type="STRING" id="63737.Npun_F4863"/>
<dbReference type="EnsemblBacteria" id="ACC83210">
    <property type="protein sequence ID" value="ACC83210"/>
    <property type="gene ID" value="Npun_F4863"/>
</dbReference>
<dbReference type="KEGG" id="npu:Npun_F4863"/>
<dbReference type="eggNOG" id="COG0056">
    <property type="taxonomic scope" value="Bacteria"/>
</dbReference>
<dbReference type="HOGENOM" id="CLU_010091_2_1_3"/>
<dbReference type="OrthoDB" id="9803053at2"/>
<dbReference type="PhylomeDB" id="B2J058"/>
<dbReference type="Proteomes" id="UP000001191">
    <property type="component" value="Chromosome"/>
</dbReference>
<dbReference type="GO" id="GO:0031676">
    <property type="term" value="C:plasma membrane-derived thylakoid membrane"/>
    <property type="evidence" value="ECO:0007669"/>
    <property type="project" value="UniProtKB-SubCell"/>
</dbReference>
<dbReference type="GO" id="GO:0045259">
    <property type="term" value="C:proton-transporting ATP synthase complex"/>
    <property type="evidence" value="ECO:0007669"/>
    <property type="project" value="UniProtKB-KW"/>
</dbReference>
<dbReference type="GO" id="GO:0043531">
    <property type="term" value="F:ADP binding"/>
    <property type="evidence" value="ECO:0007669"/>
    <property type="project" value="TreeGrafter"/>
</dbReference>
<dbReference type="GO" id="GO:0005524">
    <property type="term" value="F:ATP binding"/>
    <property type="evidence" value="ECO:0007669"/>
    <property type="project" value="UniProtKB-UniRule"/>
</dbReference>
<dbReference type="GO" id="GO:0046933">
    <property type="term" value="F:proton-transporting ATP synthase activity, rotational mechanism"/>
    <property type="evidence" value="ECO:0007669"/>
    <property type="project" value="UniProtKB-UniRule"/>
</dbReference>
<dbReference type="CDD" id="cd18113">
    <property type="entry name" value="ATP-synt_F1_alpha_C"/>
    <property type="match status" value="1"/>
</dbReference>
<dbReference type="CDD" id="cd18116">
    <property type="entry name" value="ATP-synt_F1_alpha_N"/>
    <property type="match status" value="1"/>
</dbReference>
<dbReference type="CDD" id="cd01132">
    <property type="entry name" value="F1-ATPase_alpha_CD"/>
    <property type="match status" value="1"/>
</dbReference>
<dbReference type="FunFam" id="1.20.150.20:FF:000001">
    <property type="entry name" value="ATP synthase subunit alpha"/>
    <property type="match status" value="1"/>
</dbReference>
<dbReference type="FunFam" id="2.40.30.20:FF:000001">
    <property type="entry name" value="ATP synthase subunit alpha"/>
    <property type="match status" value="1"/>
</dbReference>
<dbReference type="FunFam" id="3.40.50.300:FF:000002">
    <property type="entry name" value="ATP synthase subunit alpha"/>
    <property type="match status" value="1"/>
</dbReference>
<dbReference type="Gene3D" id="2.40.30.20">
    <property type="match status" value="1"/>
</dbReference>
<dbReference type="Gene3D" id="1.20.150.20">
    <property type="entry name" value="ATP synthase alpha/beta chain, C-terminal domain"/>
    <property type="match status" value="1"/>
</dbReference>
<dbReference type="Gene3D" id="3.40.50.300">
    <property type="entry name" value="P-loop containing nucleotide triphosphate hydrolases"/>
    <property type="match status" value="1"/>
</dbReference>
<dbReference type="HAMAP" id="MF_01346">
    <property type="entry name" value="ATP_synth_alpha_bact"/>
    <property type="match status" value="1"/>
</dbReference>
<dbReference type="InterPro" id="IPR023366">
    <property type="entry name" value="ATP_synth_asu-like_sf"/>
</dbReference>
<dbReference type="InterPro" id="IPR000793">
    <property type="entry name" value="ATP_synth_asu_C"/>
</dbReference>
<dbReference type="InterPro" id="IPR038376">
    <property type="entry name" value="ATP_synth_asu_C_sf"/>
</dbReference>
<dbReference type="InterPro" id="IPR033732">
    <property type="entry name" value="ATP_synth_F1_a_nt-bd_dom"/>
</dbReference>
<dbReference type="InterPro" id="IPR005294">
    <property type="entry name" value="ATP_synth_F1_asu"/>
</dbReference>
<dbReference type="InterPro" id="IPR020003">
    <property type="entry name" value="ATPase_a/bsu_AS"/>
</dbReference>
<dbReference type="InterPro" id="IPR004100">
    <property type="entry name" value="ATPase_F1/V1/A1_a/bsu_N"/>
</dbReference>
<dbReference type="InterPro" id="IPR036121">
    <property type="entry name" value="ATPase_F1/V1/A1_a/bsu_N_sf"/>
</dbReference>
<dbReference type="InterPro" id="IPR000194">
    <property type="entry name" value="ATPase_F1/V1/A1_a/bsu_nucl-bd"/>
</dbReference>
<dbReference type="InterPro" id="IPR027417">
    <property type="entry name" value="P-loop_NTPase"/>
</dbReference>
<dbReference type="NCBIfam" id="TIGR00962">
    <property type="entry name" value="atpA"/>
    <property type="match status" value="1"/>
</dbReference>
<dbReference type="NCBIfam" id="NF009884">
    <property type="entry name" value="PRK13343.1"/>
    <property type="match status" value="1"/>
</dbReference>
<dbReference type="PANTHER" id="PTHR48082">
    <property type="entry name" value="ATP SYNTHASE SUBUNIT ALPHA, MITOCHONDRIAL"/>
    <property type="match status" value="1"/>
</dbReference>
<dbReference type="PANTHER" id="PTHR48082:SF2">
    <property type="entry name" value="ATP SYNTHASE SUBUNIT ALPHA, MITOCHONDRIAL"/>
    <property type="match status" value="1"/>
</dbReference>
<dbReference type="Pfam" id="PF00006">
    <property type="entry name" value="ATP-synt_ab"/>
    <property type="match status" value="1"/>
</dbReference>
<dbReference type="Pfam" id="PF00306">
    <property type="entry name" value="ATP-synt_ab_C"/>
    <property type="match status" value="1"/>
</dbReference>
<dbReference type="Pfam" id="PF02874">
    <property type="entry name" value="ATP-synt_ab_N"/>
    <property type="match status" value="1"/>
</dbReference>
<dbReference type="PIRSF" id="PIRSF039088">
    <property type="entry name" value="F_ATPase_subunit_alpha"/>
    <property type="match status" value="1"/>
</dbReference>
<dbReference type="SUPFAM" id="SSF47917">
    <property type="entry name" value="C-terminal domain of alpha and beta subunits of F1 ATP synthase"/>
    <property type="match status" value="1"/>
</dbReference>
<dbReference type="SUPFAM" id="SSF50615">
    <property type="entry name" value="N-terminal domain of alpha and beta subunits of F1 ATP synthase"/>
    <property type="match status" value="1"/>
</dbReference>
<dbReference type="SUPFAM" id="SSF52540">
    <property type="entry name" value="P-loop containing nucleoside triphosphate hydrolases"/>
    <property type="match status" value="1"/>
</dbReference>
<dbReference type="PROSITE" id="PS00152">
    <property type="entry name" value="ATPASE_ALPHA_BETA"/>
    <property type="match status" value="1"/>
</dbReference>
<comment type="function">
    <text evidence="1">Produces ATP from ADP in the presence of a proton gradient across the membrane. The alpha chain is a regulatory subunit.</text>
</comment>
<comment type="catalytic activity">
    <reaction evidence="1">
        <text>ATP + H2O + 4 H(+)(in) = ADP + phosphate + 5 H(+)(out)</text>
        <dbReference type="Rhea" id="RHEA:57720"/>
        <dbReference type="ChEBI" id="CHEBI:15377"/>
        <dbReference type="ChEBI" id="CHEBI:15378"/>
        <dbReference type="ChEBI" id="CHEBI:30616"/>
        <dbReference type="ChEBI" id="CHEBI:43474"/>
        <dbReference type="ChEBI" id="CHEBI:456216"/>
        <dbReference type="EC" id="7.1.2.2"/>
    </reaction>
</comment>
<comment type="subunit">
    <text evidence="1">F-type ATPases have 2 components, CF(1) - the catalytic core - and CF(0) - the membrane proton channel. CF(1) has five subunits: alpha(3), beta(3), gamma(1), delta(1), epsilon(1). CF(0) has four main subunits: a, b, b' and c.</text>
</comment>
<comment type="subcellular location">
    <subcellularLocation>
        <location evidence="1">Cellular thylakoid membrane</location>
        <topology evidence="1">Peripheral membrane protein</topology>
    </subcellularLocation>
</comment>
<comment type="similarity">
    <text evidence="1">Belongs to the ATPase alpha/beta chains family.</text>
</comment>
<feature type="chain" id="PRO_1000143415" description="ATP synthase subunit alpha">
    <location>
        <begin position="1"/>
        <end position="506"/>
    </location>
</feature>
<feature type="binding site" evidence="1">
    <location>
        <begin position="171"/>
        <end position="178"/>
    </location>
    <ligand>
        <name>ATP</name>
        <dbReference type="ChEBI" id="CHEBI:30616"/>
    </ligand>
</feature>
<feature type="site" description="Required for activity" evidence="1">
    <location>
        <position position="364"/>
    </location>
</feature>
<organism>
    <name type="scientific">Nostoc punctiforme (strain ATCC 29133 / PCC 73102)</name>
    <dbReference type="NCBI Taxonomy" id="63737"/>
    <lineage>
        <taxon>Bacteria</taxon>
        <taxon>Bacillati</taxon>
        <taxon>Cyanobacteriota</taxon>
        <taxon>Cyanophyceae</taxon>
        <taxon>Nostocales</taxon>
        <taxon>Nostocaceae</taxon>
        <taxon>Nostoc</taxon>
    </lineage>
</organism>
<sequence length="506" mass="54496">MSISIRPDEISSIIQQQIEQYDQEVKVANVGTVLQVGDGIARIYGLEKAMAGELLEFEDGTIGIAQNLEEDNVGAVLMGEGLEIQEGSSVTATGRIAQIPVGEALIGRVVDALGRPIDGKGDIKSSESRLIESPAPGIIARRSVHEPMQTGITAIDSMIPIGRGQRELIIGDRQTGKTAIAIDTIINQKEEDVICVYVAIGQKASTVANVVQTLQEKGAMDYTIVVAASASEPATLQYLAPYTGATIAEYFMYKGKATLVIYDDLSKQAQAYRQMSLLLRRPPGREAYPGDVFYIHSRLLERAAKLSDELGKGSMTALPIIETQAGDVSAYIPTNVISITDGQIFLSSDLFNAGIRPAVNPGISVSRVGSAAQTKAMKKVAGKIKLELAQFDDLQAFAQFASDLDKATQDQLARGQRLRELLKQPQNSPLSVYEQVAILYAGINGYLDDVPVDKVTSFTQGLREYLKTGKTQYAEGVRTSKALGDAEEAALKEALTEYKKTFKAAA</sequence>
<reference key="1">
    <citation type="journal article" date="2013" name="Plant Physiol.">
        <title>A Nostoc punctiforme Sugar Transporter Necessary to Establish a Cyanobacterium-Plant Symbiosis.</title>
        <authorList>
            <person name="Ekman M."/>
            <person name="Picossi S."/>
            <person name="Campbell E.L."/>
            <person name="Meeks J.C."/>
            <person name="Flores E."/>
        </authorList>
    </citation>
    <scope>NUCLEOTIDE SEQUENCE [LARGE SCALE GENOMIC DNA]</scope>
    <source>
        <strain>ATCC 29133 / PCC 73102</strain>
    </source>
</reference>
<protein>
    <recommendedName>
        <fullName evidence="1">ATP synthase subunit alpha</fullName>
        <ecNumber evidence="1">7.1.2.2</ecNumber>
    </recommendedName>
    <alternativeName>
        <fullName evidence="1">ATP synthase F1 sector subunit alpha</fullName>
    </alternativeName>
    <alternativeName>
        <fullName evidence="1">F-ATPase subunit alpha</fullName>
    </alternativeName>
</protein>
<evidence type="ECO:0000255" key="1">
    <source>
        <dbReference type="HAMAP-Rule" id="MF_01346"/>
    </source>
</evidence>